<protein>
    <recommendedName>
        <fullName evidence="1">Protoheme IX farnesyltransferase</fullName>
        <ecNumber evidence="1">2.5.1.141</ecNumber>
    </recommendedName>
    <alternativeName>
        <fullName evidence="1">Heme B farnesyltransferase</fullName>
    </alternativeName>
    <alternativeName>
        <fullName evidence="1">Heme O synthase</fullName>
    </alternativeName>
</protein>
<comment type="function">
    <text evidence="1">Converts heme B (protoheme IX) to heme O by substitution of the vinyl group on carbon 2 of heme B porphyrin ring with a hydroxyethyl farnesyl side group.</text>
</comment>
<comment type="catalytic activity">
    <reaction evidence="1">
        <text>heme b + (2E,6E)-farnesyl diphosphate + H2O = Fe(II)-heme o + diphosphate</text>
        <dbReference type="Rhea" id="RHEA:28070"/>
        <dbReference type="ChEBI" id="CHEBI:15377"/>
        <dbReference type="ChEBI" id="CHEBI:33019"/>
        <dbReference type="ChEBI" id="CHEBI:60344"/>
        <dbReference type="ChEBI" id="CHEBI:60530"/>
        <dbReference type="ChEBI" id="CHEBI:175763"/>
        <dbReference type="EC" id="2.5.1.141"/>
    </reaction>
</comment>
<comment type="pathway">
    <text evidence="1">Porphyrin-containing compound metabolism; heme O biosynthesis; heme O from protoheme: step 1/1.</text>
</comment>
<comment type="subcellular location">
    <subcellularLocation>
        <location evidence="1">Cell inner membrane</location>
        <topology evidence="1">Multi-pass membrane protein</topology>
    </subcellularLocation>
</comment>
<comment type="miscellaneous">
    <text evidence="1">Carbon 2 of the heme B porphyrin ring is defined according to the Fischer nomenclature.</text>
</comment>
<comment type="similarity">
    <text evidence="1">Belongs to the UbiA prenyltransferase family. Protoheme IX farnesyltransferase subfamily.</text>
</comment>
<feature type="chain" id="PRO_0000327188" description="Protoheme IX farnesyltransferase">
    <location>
        <begin position="1"/>
        <end position="300"/>
    </location>
</feature>
<feature type="transmembrane region" description="Helical" evidence="1">
    <location>
        <begin position="26"/>
        <end position="46"/>
    </location>
</feature>
<feature type="transmembrane region" description="Helical" evidence="1">
    <location>
        <begin position="54"/>
        <end position="74"/>
    </location>
</feature>
<feature type="transmembrane region" description="Helical" evidence="1">
    <location>
        <begin position="102"/>
        <end position="122"/>
    </location>
</feature>
<feature type="transmembrane region" description="Helical" evidence="1">
    <location>
        <begin position="123"/>
        <end position="143"/>
    </location>
</feature>
<feature type="transmembrane region" description="Helical" evidence="1">
    <location>
        <begin position="150"/>
        <end position="170"/>
    </location>
</feature>
<feature type="transmembrane region" description="Helical" evidence="1">
    <location>
        <begin position="177"/>
        <end position="197"/>
    </location>
</feature>
<feature type="transmembrane region" description="Helical" evidence="1">
    <location>
        <begin position="224"/>
        <end position="244"/>
    </location>
</feature>
<feature type="transmembrane region" description="Helical" evidence="1">
    <location>
        <begin position="246"/>
        <end position="266"/>
    </location>
</feature>
<feature type="transmembrane region" description="Helical" evidence="1">
    <location>
        <begin position="279"/>
        <end position="299"/>
    </location>
</feature>
<name>COXX_VEREI</name>
<dbReference type="EC" id="2.5.1.141" evidence="1"/>
<dbReference type="EMBL" id="CP000542">
    <property type="protein sequence ID" value="ABM57152.1"/>
    <property type="molecule type" value="Genomic_DNA"/>
</dbReference>
<dbReference type="RefSeq" id="WP_011809161.1">
    <property type="nucleotide sequence ID" value="NC_008786.1"/>
</dbReference>
<dbReference type="SMR" id="A1WHP5"/>
<dbReference type="STRING" id="391735.Veis_1388"/>
<dbReference type="GeneID" id="76460023"/>
<dbReference type="KEGG" id="vei:Veis_1388"/>
<dbReference type="eggNOG" id="COG0109">
    <property type="taxonomic scope" value="Bacteria"/>
</dbReference>
<dbReference type="HOGENOM" id="CLU_029631_0_2_4"/>
<dbReference type="OrthoDB" id="9814417at2"/>
<dbReference type="UniPathway" id="UPA00834">
    <property type="reaction ID" value="UER00712"/>
</dbReference>
<dbReference type="Proteomes" id="UP000000374">
    <property type="component" value="Chromosome"/>
</dbReference>
<dbReference type="GO" id="GO:0005886">
    <property type="term" value="C:plasma membrane"/>
    <property type="evidence" value="ECO:0007669"/>
    <property type="project" value="UniProtKB-SubCell"/>
</dbReference>
<dbReference type="GO" id="GO:0008495">
    <property type="term" value="F:protoheme IX farnesyltransferase activity"/>
    <property type="evidence" value="ECO:0007669"/>
    <property type="project" value="UniProtKB-UniRule"/>
</dbReference>
<dbReference type="GO" id="GO:0048034">
    <property type="term" value="P:heme O biosynthetic process"/>
    <property type="evidence" value="ECO:0007669"/>
    <property type="project" value="UniProtKB-UniRule"/>
</dbReference>
<dbReference type="CDD" id="cd13957">
    <property type="entry name" value="PT_UbiA_Cox10"/>
    <property type="match status" value="1"/>
</dbReference>
<dbReference type="Gene3D" id="1.10.357.140">
    <property type="entry name" value="UbiA prenyltransferase"/>
    <property type="match status" value="1"/>
</dbReference>
<dbReference type="HAMAP" id="MF_00154">
    <property type="entry name" value="CyoE_CtaB"/>
    <property type="match status" value="1"/>
</dbReference>
<dbReference type="InterPro" id="IPR017452">
    <property type="entry name" value="GPCR_Rhodpsn_7TM"/>
</dbReference>
<dbReference type="InterPro" id="IPR006369">
    <property type="entry name" value="Protohaem_IX_farnesylTrfase"/>
</dbReference>
<dbReference type="InterPro" id="IPR000537">
    <property type="entry name" value="UbiA_prenyltransferase"/>
</dbReference>
<dbReference type="InterPro" id="IPR030470">
    <property type="entry name" value="UbiA_prenylTrfase_CS"/>
</dbReference>
<dbReference type="InterPro" id="IPR044878">
    <property type="entry name" value="UbiA_sf"/>
</dbReference>
<dbReference type="NCBIfam" id="TIGR01473">
    <property type="entry name" value="cyoE_ctaB"/>
    <property type="match status" value="1"/>
</dbReference>
<dbReference type="NCBIfam" id="NF003349">
    <property type="entry name" value="PRK04375.1-2"/>
    <property type="match status" value="1"/>
</dbReference>
<dbReference type="PANTHER" id="PTHR43448:SF7">
    <property type="entry name" value="4-HYDROXYBENZOATE SOLANESYLTRANSFERASE"/>
    <property type="match status" value="1"/>
</dbReference>
<dbReference type="PANTHER" id="PTHR43448">
    <property type="entry name" value="PROTOHEME IX FARNESYLTRANSFERASE, MITOCHONDRIAL"/>
    <property type="match status" value="1"/>
</dbReference>
<dbReference type="Pfam" id="PF01040">
    <property type="entry name" value="UbiA"/>
    <property type="match status" value="1"/>
</dbReference>
<dbReference type="PROSITE" id="PS00943">
    <property type="entry name" value="UBIA"/>
    <property type="match status" value="1"/>
</dbReference>
<organism>
    <name type="scientific">Verminephrobacter eiseniae (strain EF01-2)</name>
    <dbReference type="NCBI Taxonomy" id="391735"/>
    <lineage>
        <taxon>Bacteria</taxon>
        <taxon>Pseudomonadati</taxon>
        <taxon>Pseudomonadota</taxon>
        <taxon>Betaproteobacteria</taxon>
        <taxon>Burkholderiales</taxon>
        <taxon>Comamonadaceae</taxon>
        <taxon>Verminephrobacter</taxon>
    </lineage>
</organism>
<proteinExistence type="inferred from homology"/>
<accession>A1WHP5</accession>
<reference key="1">
    <citation type="submission" date="2006-12" db="EMBL/GenBank/DDBJ databases">
        <title>Complete sequence of chromosome 1 of Verminephrobacter eiseniae EF01-2.</title>
        <authorList>
            <person name="Copeland A."/>
            <person name="Lucas S."/>
            <person name="Lapidus A."/>
            <person name="Barry K."/>
            <person name="Detter J.C."/>
            <person name="Glavina del Rio T."/>
            <person name="Dalin E."/>
            <person name="Tice H."/>
            <person name="Pitluck S."/>
            <person name="Chertkov O."/>
            <person name="Brettin T."/>
            <person name="Bruce D."/>
            <person name="Han C."/>
            <person name="Tapia R."/>
            <person name="Gilna P."/>
            <person name="Schmutz J."/>
            <person name="Larimer F."/>
            <person name="Land M."/>
            <person name="Hauser L."/>
            <person name="Kyrpides N."/>
            <person name="Kim E."/>
            <person name="Stahl D."/>
            <person name="Richardson P."/>
        </authorList>
    </citation>
    <scope>NUCLEOTIDE SEQUENCE [LARGE SCALE GENOMIC DNA]</scope>
    <source>
        <strain>EF01-2</strain>
    </source>
</reference>
<keyword id="KW-0997">Cell inner membrane</keyword>
<keyword id="KW-1003">Cell membrane</keyword>
<keyword id="KW-0350">Heme biosynthesis</keyword>
<keyword id="KW-0472">Membrane</keyword>
<keyword id="KW-1185">Reference proteome</keyword>
<keyword id="KW-0808">Transferase</keyword>
<keyword id="KW-0812">Transmembrane</keyword>
<keyword id="KW-1133">Transmembrane helix</keyword>
<sequence length="300" mass="32639">MSAAPPVAVSAPSRLRQFYALTKPRVVQLIVFCALIGMVLAVPGLPSAAQWGRIAWACAGVWLVAGAAAAFNCIVEQGIDAKMKRTAWRPTARGELSNAQTLLFSALLCVAGSALLYFLVNPLTMWLTFATFVGYAVIYTLILKPLTPQNIVIGGASGAMPPVLGWAAMTNTVGPEALILFLIIFLWTPPHFWALALYRVEEYRQSGLPMLPVTHGSAFTRLQVLLYTLILFAACLMPFIYGMSSWPYLAAAVLLGAGFCGYGFALWRNYSDALARKTFRFSLIHLSALFAALLLDHYLP</sequence>
<evidence type="ECO:0000255" key="1">
    <source>
        <dbReference type="HAMAP-Rule" id="MF_00154"/>
    </source>
</evidence>
<gene>
    <name evidence="1" type="primary">ctaB</name>
    <name type="ordered locus">Veis_1388</name>
</gene>